<proteinExistence type="inferred from homology"/>
<accession>A5F618</accession>
<accession>C3M3L4</accession>
<dbReference type="EMBL" id="CP000627">
    <property type="protein sequence ID" value="ABQ19583.1"/>
    <property type="molecule type" value="Genomic_DNA"/>
</dbReference>
<dbReference type="EMBL" id="CP001235">
    <property type="protein sequence ID" value="ACP10363.1"/>
    <property type="molecule type" value="Genomic_DNA"/>
</dbReference>
<dbReference type="RefSeq" id="WP_000606619.1">
    <property type="nucleotide sequence ID" value="NZ_JAACZH010000008.1"/>
</dbReference>
<dbReference type="SMR" id="A5F618"/>
<dbReference type="GeneID" id="88783084"/>
<dbReference type="KEGG" id="vco:VC0395_A1848"/>
<dbReference type="KEGG" id="vcr:VC395_2373"/>
<dbReference type="PATRIC" id="fig|345073.21.peg.2288"/>
<dbReference type="eggNOG" id="COG0233">
    <property type="taxonomic scope" value="Bacteria"/>
</dbReference>
<dbReference type="HOGENOM" id="CLU_073981_2_1_6"/>
<dbReference type="OrthoDB" id="9804006at2"/>
<dbReference type="Proteomes" id="UP000000249">
    <property type="component" value="Chromosome 2"/>
</dbReference>
<dbReference type="GO" id="GO:0005829">
    <property type="term" value="C:cytosol"/>
    <property type="evidence" value="ECO:0007669"/>
    <property type="project" value="GOC"/>
</dbReference>
<dbReference type="GO" id="GO:0043023">
    <property type="term" value="F:ribosomal large subunit binding"/>
    <property type="evidence" value="ECO:0007669"/>
    <property type="project" value="TreeGrafter"/>
</dbReference>
<dbReference type="GO" id="GO:0002184">
    <property type="term" value="P:cytoplasmic translational termination"/>
    <property type="evidence" value="ECO:0007669"/>
    <property type="project" value="TreeGrafter"/>
</dbReference>
<dbReference type="CDD" id="cd00520">
    <property type="entry name" value="RRF"/>
    <property type="match status" value="1"/>
</dbReference>
<dbReference type="FunFam" id="1.10.132.20:FF:000001">
    <property type="entry name" value="Ribosome-recycling factor"/>
    <property type="match status" value="1"/>
</dbReference>
<dbReference type="FunFam" id="3.30.1360.40:FF:000001">
    <property type="entry name" value="Ribosome-recycling factor"/>
    <property type="match status" value="1"/>
</dbReference>
<dbReference type="Gene3D" id="3.30.1360.40">
    <property type="match status" value="1"/>
</dbReference>
<dbReference type="Gene3D" id="1.10.132.20">
    <property type="entry name" value="Ribosome-recycling factor"/>
    <property type="match status" value="1"/>
</dbReference>
<dbReference type="HAMAP" id="MF_00040">
    <property type="entry name" value="RRF"/>
    <property type="match status" value="1"/>
</dbReference>
<dbReference type="InterPro" id="IPR002661">
    <property type="entry name" value="Ribosome_recyc_fac"/>
</dbReference>
<dbReference type="InterPro" id="IPR023584">
    <property type="entry name" value="Ribosome_recyc_fac_dom"/>
</dbReference>
<dbReference type="InterPro" id="IPR036191">
    <property type="entry name" value="RRF_sf"/>
</dbReference>
<dbReference type="NCBIfam" id="TIGR00496">
    <property type="entry name" value="frr"/>
    <property type="match status" value="1"/>
</dbReference>
<dbReference type="PANTHER" id="PTHR20982:SF3">
    <property type="entry name" value="MITOCHONDRIAL RIBOSOME RECYCLING FACTOR PSEUDO 1"/>
    <property type="match status" value="1"/>
</dbReference>
<dbReference type="PANTHER" id="PTHR20982">
    <property type="entry name" value="RIBOSOME RECYCLING FACTOR"/>
    <property type="match status" value="1"/>
</dbReference>
<dbReference type="Pfam" id="PF01765">
    <property type="entry name" value="RRF"/>
    <property type="match status" value="1"/>
</dbReference>
<dbReference type="SUPFAM" id="SSF55194">
    <property type="entry name" value="Ribosome recycling factor, RRF"/>
    <property type="match status" value="1"/>
</dbReference>
<feature type="chain" id="PRO_1000071067" description="Ribosome-recycling factor">
    <location>
        <begin position="1"/>
        <end position="185"/>
    </location>
</feature>
<protein>
    <recommendedName>
        <fullName evidence="1">Ribosome-recycling factor</fullName>
        <shortName evidence="1">RRF</shortName>
    </recommendedName>
    <alternativeName>
        <fullName evidence="1">Ribosome-releasing factor</fullName>
    </alternativeName>
</protein>
<gene>
    <name evidence="1" type="primary">frr</name>
    <name type="ordered locus">VC0395_A1848</name>
    <name type="ordered locus">VC395_2373</name>
</gene>
<sequence length="185" mass="20638">MINEIKKDAQERMEKSVEALKNGLSKIRTGRAHPSLLTGISVDYYGAPTPLNQVANVIAEDARTLAITVFDRELTQKVEKAILMSDLGLNPMSAGTIIRVPLPPLTEERRRDLVKIVRGEAEGGRVAVRNIRRDANNDLKALLKDKEISEDDERRAQEEIQKLTDAAVKKIDDVLAAKEKELMEV</sequence>
<keyword id="KW-0963">Cytoplasm</keyword>
<keyword id="KW-0648">Protein biosynthesis</keyword>
<organism>
    <name type="scientific">Vibrio cholerae serotype O1 (strain ATCC 39541 / Classical Ogawa 395 / O395)</name>
    <dbReference type="NCBI Taxonomy" id="345073"/>
    <lineage>
        <taxon>Bacteria</taxon>
        <taxon>Pseudomonadati</taxon>
        <taxon>Pseudomonadota</taxon>
        <taxon>Gammaproteobacteria</taxon>
        <taxon>Vibrionales</taxon>
        <taxon>Vibrionaceae</taxon>
        <taxon>Vibrio</taxon>
    </lineage>
</organism>
<comment type="function">
    <text evidence="1">Responsible for the release of ribosomes from messenger RNA at the termination of protein biosynthesis. May increase the efficiency of translation by recycling ribosomes from one round of translation to another.</text>
</comment>
<comment type="subcellular location">
    <subcellularLocation>
        <location evidence="1">Cytoplasm</location>
    </subcellularLocation>
</comment>
<comment type="similarity">
    <text evidence="1">Belongs to the RRF family.</text>
</comment>
<reference key="1">
    <citation type="submission" date="2007-03" db="EMBL/GenBank/DDBJ databases">
        <authorList>
            <person name="Heidelberg J."/>
        </authorList>
    </citation>
    <scope>NUCLEOTIDE SEQUENCE [LARGE SCALE GENOMIC DNA]</scope>
    <source>
        <strain>ATCC 39541 / Classical Ogawa 395 / O395</strain>
    </source>
</reference>
<reference key="2">
    <citation type="journal article" date="2008" name="PLoS ONE">
        <title>A recalibrated molecular clock and independent origins for the cholera pandemic clones.</title>
        <authorList>
            <person name="Feng L."/>
            <person name="Reeves P.R."/>
            <person name="Lan R."/>
            <person name="Ren Y."/>
            <person name="Gao C."/>
            <person name="Zhou Z."/>
            <person name="Ren Y."/>
            <person name="Cheng J."/>
            <person name="Wang W."/>
            <person name="Wang J."/>
            <person name="Qian W."/>
            <person name="Li D."/>
            <person name="Wang L."/>
        </authorList>
    </citation>
    <scope>NUCLEOTIDE SEQUENCE [LARGE SCALE GENOMIC DNA]</scope>
    <source>
        <strain>ATCC 39541 / Classical Ogawa 395 / O395</strain>
    </source>
</reference>
<name>RRF_VIBC3</name>
<evidence type="ECO:0000255" key="1">
    <source>
        <dbReference type="HAMAP-Rule" id="MF_00040"/>
    </source>
</evidence>